<reference key="1">
    <citation type="journal article" date="1994" name="J. Bacteriol.">
        <title>Cloning, sequencing, and expression of thermophilic Bacillus sp. strain TB-90 urease gene complex in Escherichia coli.</title>
        <authorList>
            <person name="Maeda M."/>
            <person name="Hidaka M."/>
            <person name="Nakamura A."/>
            <person name="Masaki H."/>
            <person name="Uozumi T."/>
        </authorList>
    </citation>
    <scope>NUCLEOTIDE SEQUENCE [GENOMIC DNA]</scope>
</reference>
<evidence type="ECO:0000255" key="1"/>
<evidence type="ECO:0000305" key="2"/>
<organism>
    <name type="scientific">Bacillus sp. (strain TB-90)</name>
    <dbReference type="NCBI Taxonomy" id="36824"/>
    <lineage>
        <taxon>Bacteria</taxon>
        <taxon>Bacillati</taxon>
        <taxon>Bacillota</taxon>
        <taxon>Bacilli</taxon>
        <taxon>Bacillales</taxon>
        <taxon>Bacillaceae</taxon>
        <taxon>Bacillus</taxon>
    </lineage>
</organism>
<protein>
    <recommendedName>
        <fullName>Urease accessory protein UreH</fullName>
    </recommendedName>
</protein>
<accession>Q07404</accession>
<name>UREH_BACSB</name>
<comment type="function">
    <text>Probably facilitates nickel incorporation. May constitute a multicomponent high-affinity nickel transporter. Not essential for the expression of catalytically active urease.</text>
</comment>
<comment type="subcellular location">
    <subcellularLocation>
        <location evidence="2">Cell membrane</location>
        <topology evidence="2">Multi-pass membrane protein</topology>
    </subcellularLocation>
</comment>
<comment type="similarity">
    <text evidence="2">Belongs to the NiCoT transporter (TC 2.A.52) family.</text>
</comment>
<proteinExistence type="inferred from homology"/>
<dbReference type="EMBL" id="D14439">
    <property type="protein sequence ID" value="BAA03330.1"/>
    <property type="molecule type" value="Genomic_DNA"/>
</dbReference>
<dbReference type="PIR" id="H36950">
    <property type="entry name" value="H36950"/>
</dbReference>
<dbReference type="GO" id="GO:0005886">
    <property type="term" value="C:plasma membrane"/>
    <property type="evidence" value="ECO:0007669"/>
    <property type="project" value="UniProtKB-SubCell"/>
</dbReference>
<dbReference type="InterPro" id="IPR052776">
    <property type="entry name" value="Chloro_ReproSupport/MetalTrans"/>
</dbReference>
<dbReference type="InterPro" id="IPR039447">
    <property type="entry name" value="UreH-like_TM_dom"/>
</dbReference>
<dbReference type="PANTHER" id="PTHR33876:SF4">
    <property type="entry name" value="CHLOROPLAST PROTEIN FOR GROWTH AND FERTILITY 2"/>
    <property type="match status" value="1"/>
</dbReference>
<dbReference type="PANTHER" id="PTHR33876">
    <property type="entry name" value="UNNAMED PRODUCT"/>
    <property type="match status" value="1"/>
</dbReference>
<dbReference type="Pfam" id="PF13386">
    <property type="entry name" value="DsbD_2"/>
    <property type="match status" value="1"/>
</dbReference>
<feature type="chain" id="PRO_0000194008" description="Urease accessory protein UreH">
    <location>
        <begin position="1"/>
        <end position="228"/>
    </location>
</feature>
<feature type="transmembrane region" description="Helical" evidence="1">
    <location>
        <begin position="48"/>
        <end position="68"/>
    </location>
</feature>
<feature type="transmembrane region" description="Helical" evidence="1">
    <location>
        <begin position="79"/>
        <end position="99"/>
    </location>
</feature>
<feature type="transmembrane region" description="Helical" evidence="1">
    <location>
        <begin position="130"/>
        <end position="150"/>
    </location>
</feature>
<feature type="transmembrane region" description="Helical" evidence="1">
    <location>
        <begin position="162"/>
        <end position="182"/>
    </location>
</feature>
<feature type="transmembrane region" description="Helical" evidence="1">
    <location>
        <begin position="196"/>
        <end position="216"/>
    </location>
</feature>
<sequence>MDQVDLLSILTLGFVLGIKHAMEPDHVIAVSTIVCQSKKLWRSSLAGVFWGIGHTSTLLIFGMTIILMKKKISQEWSMSLEFLVGIILVYFGISAILSLKKTHEHSHSRLHLHTDHPIYTYKGIPYVKSLFIGIIHGLAGSAAMVLLTMSTVEKAWEGLLYILFFGAGTVLGMLSFTTLIGIPFTLSARKIRIHNAFIQITGFISTVFGIHYMYNLGVTEGLFKLWIR</sequence>
<keyword id="KW-1003">Cell membrane</keyword>
<keyword id="KW-0472">Membrane</keyword>
<keyword id="KW-0533">Nickel</keyword>
<keyword id="KW-0812">Transmembrane</keyword>
<keyword id="KW-1133">Transmembrane helix</keyword>
<keyword id="KW-0813">Transport</keyword>
<gene>
    <name type="primary">ureH</name>
</gene>